<keyword id="KW-0028">Amino-acid biosynthesis</keyword>
<keyword id="KW-0067">ATP-binding</keyword>
<keyword id="KW-0963">Cytoplasm</keyword>
<keyword id="KW-0418">Kinase</keyword>
<keyword id="KW-0547">Nucleotide-binding</keyword>
<keyword id="KW-0641">Proline biosynthesis</keyword>
<keyword id="KW-1185">Reference proteome</keyword>
<keyword id="KW-0808">Transferase</keyword>
<accession>Q1QQT9</accession>
<organism>
    <name type="scientific">Nitrobacter hamburgensis (strain DSM 10229 / NCIMB 13809 / X14)</name>
    <dbReference type="NCBI Taxonomy" id="323097"/>
    <lineage>
        <taxon>Bacteria</taxon>
        <taxon>Pseudomonadati</taxon>
        <taxon>Pseudomonadota</taxon>
        <taxon>Alphaproteobacteria</taxon>
        <taxon>Hyphomicrobiales</taxon>
        <taxon>Nitrobacteraceae</taxon>
        <taxon>Nitrobacter</taxon>
    </lineage>
</organism>
<dbReference type="EC" id="2.7.2.11" evidence="1"/>
<dbReference type="EMBL" id="CP000319">
    <property type="protein sequence ID" value="ABE61408.1"/>
    <property type="molecule type" value="Genomic_DNA"/>
</dbReference>
<dbReference type="RefSeq" id="WP_011509112.1">
    <property type="nucleotide sequence ID" value="NC_007964.1"/>
</dbReference>
<dbReference type="SMR" id="Q1QQT9"/>
<dbReference type="STRING" id="323097.Nham_0518"/>
<dbReference type="KEGG" id="nha:Nham_0518"/>
<dbReference type="eggNOG" id="COG0263">
    <property type="taxonomic scope" value="Bacteria"/>
</dbReference>
<dbReference type="HOGENOM" id="CLU_025400_2_0_5"/>
<dbReference type="OrthoDB" id="9804434at2"/>
<dbReference type="UniPathway" id="UPA00098">
    <property type="reaction ID" value="UER00359"/>
</dbReference>
<dbReference type="Proteomes" id="UP000001953">
    <property type="component" value="Chromosome"/>
</dbReference>
<dbReference type="GO" id="GO:0005829">
    <property type="term" value="C:cytosol"/>
    <property type="evidence" value="ECO:0007669"/>
    <property type="project" value="TreeGrafter"/>
</dbReference>
<dbReference type="GO" id="GO:0005524">
    <property type="term" value="F:ATP binding"/>
    <property type="evidence" value="ECO:0007669"/>
    <property type="project" value="UniProtKB-KW"/>
</dbReference>
<dbReference type="GO" id="GO:0004349">
    <property type="term" value="F:glutamate 5-kinase activity"/>
    <property type="evidence" value="ECO:0007669"/>
    <property type="project" value="UniProtKB-UniRule"/>
</dbReference>
<dbReference type="GO" id="GO:0003723">
    <property type="term" value="F:RNA binding"/>
    <property type="evidence" value="ECO:0007669"/>
    <property type="project" value="InterPro"/>
</dbReference>
<dbReference type="GO" id="GO:0055129">
    <property type="term" value="P:L-proline biosynthetic process"/>
    <property type="evidence" value="ECO:0007669"/>
    <property type="project" value="UniProtKB-UniRule"/>
</dbReference>
<dbReference type="CDD" id="cd04242">
    <property type="entry name" value="AAK_G5K_ProB"/>
    <property type="match status" value="1"/>
</dbReference>
<dbReference type="CDD" id="cd21157">
    <property type="entry name" value="PUA_G5K"/>
    <property type="match status" value="1"/>
</dbReference>
<dbReference type="FunFam" id="2.30.130.10:FF:000007">
    <property type="entry name" value="Glutamate 5-kinase"/>
    <property type="match status" value="1"/>
</dbReference>
<dbReference type="FunFam" id="3.40.1160.10:FF:000018">
    <property type="entry name" value="Glutamate 5-kinase"/>
    <property type="match status" value="1"/>
</dbReference>
<dbReference type="Gene3D" id="3.40.1160.10">
    <property type="entry name" value="Acetylglutamate kinase-like"/>
    <property type="match status" value="1"/>
</dbReference>
<dbReference type="Gene3D" id="2.30.130.10">
    <property type="entry name" value="PUA domain"/>
    <property type="match status" value="1"/>
</dbReference>
<dbReference type="HAMAP" id="MF_00456">
    <property type="entry name" value="ProB"/>
    <property type="match status" value="1"/>
</dbReference>
<dbReference type="InterPro" id="IPR036393">
    <property type="entry name" value="AceGlu_kinase-like_sf"/>
</dbReference>
<dbReference type="InterPro" id="IPR001048">
    <property type="entry name" value="Asp/Glu/Uridylate_kinase"/>
</dbReference>
<dbReference type="InterPro" id="IPR041739">
    <property type="entry name" value="G5K_ProB"/>
</dbReference>
<dbReference type="InterPro" id="IPR001057">
    <property type="entry name" value="Glu/AcGlu_kinase"/>
</dbReference>
<dbReference type="InterPro" id="IPR011529">
    <property type="entry name" value="Glu_5kinase"/>
</dbReference>
<dbReference type="InterPro" id="IPR005715">
    <property type="entry name" value="Glu_5kinase/COase_Synthase"/>
</dbReference>
<dbReference type="InterPro" id="IPR019797">
    <property type="entry name" value="Glutamate_5-kinase_CS"/>
</dbReference>
<dbReference type="InterPro" id="IPR002478">
    <property type="entry name" value="PUA"/>
</dbReference>
<dbReference type="InterPro" id="IPR015947">
    <property type="entry name" value="PUA-like_sf"/>
</dbReference>
<dbReference type="InterPro" id="IPR036974">
    <property type="entry name" value="PUA_sf"/>
</dbReference>
<dbReference type="NCBIfam" id="TIGR01027">
    <property type="entry name" value="proB"/>
    <property type="match status" value="1"/>
</dbReference>
<dbReference type="PANTHER" id="PTHR43654">
    <property type="entry name" value="GLUTAMATE 5-KINASE"/>
    <property type="match status" value="1"/>
</dbReference>
<dbReference type="PANTHER" id="PTHR43654:SF1">
    <property type="entry name" value="ISOPENTENYL PHOSPHATE KINASE"/>
    <property type="match status" value="1"/>
</dbReference>
<dbReference type="Pfam" id="PF00696">
    <property type="entry name" value="AA_kinase"/>
    <property type="match status" value="1"/>
</dbReference>
<dbReference type="Pfam" id="PF01472">
    <property type="entry name" value="PUA"/>
    <property type="match status" value="1"/>
</dbReference>
<dbReference type="PIRSF" id="PIRSF000729">
    <property type="entry name" value="GK"/>
    <property type="match status" value="1"/>
</dbReference>
<dbReference type="PRINTS" id="PR00474">
    <property type="entry name" value="GLU5KINASE"/>
</dbReference>
<dbReference type="SMART" id="SM00359">
    <property type="entry name" value="PUA"/>
    <property type="match status" value="1"/>
</dbReference>
<dbReference type="SUPFAM" id="SSF53633">
    <property type="entry name" value="Carbamate kinase-like"/>
    <property type="match status" value="1"/>
</dbReference>
<dbReference type="SUPFAM" id="SSF88697">
    <property type="entry name" value="PUA domain-like"/>
    <property type="match status" value="1"/>
</dbReference>
<dbReference type="PROSITE" id="PS00902">
    <property type="entry name" value="GLUTAMATE_5_KINASE"/>
    <property type="match status" value="1"/>
</dbReference>
<dbReference type="PROSITE" id="PS50890">
    <property type="entry name" value="PUA"/>
    <property type="match status" value="1"/>
</dbReference>
<reference key="1">
    <citation type="submission" date="2006-03" db="EMBL/GenBank/DDBJ databases">
        <title>Complete sequence of chromosome of Nitrobacter hamburgensis X14.</title>
        <authorList>
            <consortium name="US DOE Joint Genome Institute"/>
            <person name="Copeland A."/>
            <person name="Lucas S."/>
            <person name="Lapidus A."/>
            <person name="Barry K."/>
            <person name="Detter J.C."/>
            <person name="Glavina del Rio T."/>
            <person name="Hammon N."/>
            <person name="Israni S."/>
            <person name="Dalin E."/>
            <person name="Tice H."/>
            <person name="Pitluck S."/>
            <person name="Chain P."/>
            <person name="Malfatti S."/>
            <person name="Shin M."/>
            <person name="Vergez L."/>
            <person name="Schmutz J."/>
            <person name="Larimer F."/>
            <person name="Land M."/>
            <person name="Hauser L."/>
            <person name="Kyrpides N."/>
            <person name="Ivanova N."/>
            <person name="Ward B."/>
            <person name="Arp D."/>
            <person name="Klotz M."/>
            <person name="Stein L."/>
            <person name="O'Mullan G."/>
            <person name="Starkenburg S."/>
            <person name="Sayavedra L."/>
            <person name="Poret-Peterson A.T."/>
            <person name="Gentry M.E."/>
            <person name="Bruce D."/>
            <person name="Richardson P."/>
        </authorList>
    </citation>
    <scope>NUCLEOTIDE SEQUENCE [LARGE SCALE GENOMIC DNA]</scope>
    <source>
        <strain>DSM 10229 / NCIMB 13809 / X14</strain>
    </source>
</reference>
<feature type="chain" id="PRO_0000252988" description="Glutamate 5-kinase">
    <location>
        <begin position="1"/>
        <end position="379"/>
    </location>
</feature>
<feature type="domain" description="PUA" evidence="1">
    <location>
        <begin position="281"/>
        <end position="358"/>
    </location>
</feature>
<feature type="binding site" evidence="1">
    <location>
        <position position="15"/>
    </location>
    <ligand>
        <name>ATP</name>
        <dbReference type="ChEBI" id="CHEBI:30616"/>
    </ligand>
</feature>
<feature type="binding site" evidence="1">
    <location>
        <position position="56"/>
    </location>
    <ligand>
        <name>substrate</name>
    </ligand>
</feature>
<feature type="binding site" evidence="1">
    <location>
        <position position="143"/>
    </location>
    <ligand>
        <name>substrate</name>
    </ligand>
</feature>
<feature type="binding site" evidence="1">
    <location>
        <position position="155"/>
    </location>
    <ligand>
        <name>substrate</name>
    </ligand>
</feature>
<feature type="binding site" evidence="1">
    <location>
        <begin position="175"/>
        <end position="176"/>
    </location>
    <ligand>
        <name>ATP</name>
        <dbReference type="ChEBI" id="CHEBI:30616"/>
    </ligand>
</feature>
<comment type="function">
    <text evidence="1">Catalyzes the transfer of a phosphate group to glutamate to form L-glutamate 5-phosphate.</text>
</comment>
<comment type="catalytic activity">
    <reaction evidence="1">
        <text>L-glutamate + ATP = L-glutamyl 5-phosphate + ADP</text>
        <dbReference type="Rhea" id="RHEA:14877"/>
        <dbReference type="ChEBI" id="CHEBI:29985"/>
        <dbReference type="ChEBI" id="CHEBI:30616"/>
        <dbReference type="ChEBI" id="CHEBI:58274"/>
        <dbReference type="ChEBI" id="CHEBI:456216"/>
        <dbReference type="EC" id="2.7.2.11"/>
    </reaction>
</comment>
<comment type="pathway">
    <text evidence="1">Amino-acid biosynthesis; L-proline biosynthesis; L-glutamate 5-semialdehyde from L-glutamate: step 1/2.</text>
</comment>
<comment type="subcellular location">
    <subcellularLocation>
        <location evidence="1">Cytoplasm</location>
    </subcellularLocation>
</comment>
<comment type="similarity">
    <text evidence="1">Belongs to the glutamate 5-kinase family.</text>
</comment>
<protein>
    <recommendedName>
        <fullName evidence="1">Glutamate 5-kinase</fullName>
        <ecNumber evidence="1">2.7.2.11</ecNumber>
    </recommendedName>
    <alternativeName>
        <fullName evidence="1">Gamma-glutamyl kinase</fullName>
        <shortName evidence="1">GK</shortName>
    </alternativeName>
</protein>
<sequence length="379" mass="39931">MTSLHLKKFRRIVVKVGSSLLIDSDAGEVRAAWLSALADDIAGLHGEGRDVLIVSSGSIALGRSKLKLPRGPLKLEESQAAAAVGQIALARIWSKVLGDHGIGAGQILVTLQDTEERRRYLNARSTIAKLLDWRAVPVINENDTVATNEIRYGDNDRLAARVATMASADLLILLSDIDGLYDAPPHLNPDAKLIPVVKRVTADIEAMAGSAASELSRGGMQTKIEAAKIATTAGTHMLIASGKIEHPLRAVMDGGRCTWFMTPANPVTARKRWIAGSLEPKGTLTIDAGAVAALRAGKSLLPAGVIRVDGQFARGDAVIVRGPNTHEIGRGLVAYDAVDAEKIKGRSSCDAAQILGISGRAEMIHRDDLVVGGPRGGAG</sequence>
<gene>
    <name evidence="1" type="primary">proB</name>
    <name type="ordered locus">Nham_0518</name>
</gene>
<proteinExistence type="inferred from homology"/>
<name>PROB_NITHX</name>
<evidence type="ECO:0000255" key="1">
    <source>
        <dbReference type="HAMAP-Rule" id="MF_00456"/>
    </source>
</evidence>